<organism>
    <name type="scientific">Dehalococcoides mccartyi (strain ATCC BAA-2266 / KCTC 15142 / 195)</name>
    <name type="common">Dehalococcoides ethenogenes (strain 195)</name>
    <dbReference type="NCBI Taxonomy" id="243164"/>
    <lineage>
        <taxon>Bacteria</taxon>
        <taxon>Bacillati</taxon>
        <taxon>Chloroflexota</taxon>
        <taxon>Dehalococcoidia</taxon>
        <taxon>Dehalococcoidales</taxon>
        <taxon>Dehalococcoidaceae</taxon>
        <taxon>Dehalococcoides</taxon>
    </lineage>
</organism>
<dbReference type="EC" id="2.6.1.83" evidence="1"/>
<dbReference type="EMBL" id="CP000027">
    <property type="protein sequence ID" value="AAW39998.1"/>
    <property type="molecule type" value="Genomic_DNA"/>
</dbReference>
<dbReference type="RefSeq" id="WP_010936475.1">
    <property type="nucleotide sequence ID" value="NC_002936.3"/>
</dbReference>
<dbReference type="SMR" id="Q3Z8H5"/>
<dbReference type="FunCoup" id="Q3Z8H5">
    <property type="interactions" value="83"/>
</dbReference>
<dbReference type="STRING" id="243164.DET0739"/>
<dbReference type="GeneID" id="3229960"/>
<dbReference type="KEGG" id="det:DET0739"/>
<dbReference type="PATRIC" id="fig|243164.10.peg.707"/>
<dbReference type="eggNOG" id="COG0436">
    <property type="taxonomic scope" value="Bacteria"/>
</dbReference>
<dbReference type="HOGENOM" id="CLU_017584_4_5_0"/>
<dbReference type="InParanoid" id="Q3Z8H5"/>
<dbReference type="UniPathway" id="UPA00034">
    <property type="reaction ID" value="UER00466"/>
</dbReference>
<dbReference type="Proteomes" id="UP000008289">
    <property type="component" value="Chromosome"/>
</dbReference>
<dbReference type="GO" id="GO:0010285">
    <property type="term" value="F:L,L-diaminopimelate aminotransferase activity"/>
    <property type="evidence" value="ECO:0007669"/>
    <property type="project" value="UniProtKB-UniRule"/>
</dbReference>
<dbReference type="GO" id="GO:0030170">
    <property type="term" value="F:pyridoxal phosphate binding"/>
    <property type="evidence" value="ECO:0007669"/>
    <property type="project" value="UniProtKB-UniRule"/>
</dbReference>
<dbReference type="GO" id="GO:0033362">
    <property type="term" value="P:lysine biosynthetic process via diaminopimelate, diaminopimelate-aminotransferase pathway"/>
    <property type="evidence" value="ECO:0007669"/>
    <property type="project" value="UniProtKB-UniRule"/>
</dbReference>
<dbReference type="CDD" id="cd00609">
    <property type="entry name" value="AAT_like"/>
    <property type="match status" value="1"/>
</dbReference>
<dbReference type="Gene3D" id="3.90.1150.10">
    <property type="entry name" value="Aspartate Aminotransferase, domain 1"/>
    <property type="match status" value="1"/>
</dbReference>
<dbReference type="Gene3D" id="3.40.640.10">
    <property type="entry name" value="Type I PLP-dependent aspartate aminotransferase-like (Major domain)"/>
    <property type="match status" value="1"/>
</dbReference>
<dbReference type="HAMAP" id="MF_01642">
    <property type="entry name" value="DapL_aminotrans_1"/>
    <property type="match status" value="1"/>
</dbReference>
<dbReference type="InterPro" id="IPR004839">
    <property type="entry name" value="Aminotransferase_I/II_large"/>
</dbReference>
<dbReference type="InterPro" id="IPR019881">
    <property type="entry name" value="DAP-NH2Trfase_DapL_Desulfo"/>
</dbReference>
<dbReference type="InterPro" id="IPR019942">
    <property type="entry name" value="DapL/ALD1"/>
</dbReference>
<dbReference type="InterPro" id="IPR050881">
    <property type="entry name" value="LL-DAP_aminotransferase"/>
</dbReference>
<dbReference type="InterPro" id="IPR004838">
    <property type="entry name" value="NHTrfase_class1_PyrdxlP-BS"/>
</dbReference>
<dbReference type="InterPro" id="IPR015424">
    <property type="entry name" value="PyrdxlP-dep_Trfase"/>
</dbReference>
<dbReference type="InterPro" id="IPR015421">
    <property type="entry name" value="PyrdxlP-dep_Trfase_major"/>
</dbReference>
<dbReference type="InterPro" id="IPR015422">
    <property type="entry name" value="PyrdxlP-dep_Trfase_small"/>
</dbReference>
<dbReference type="NCBIfam" id="TIGR03540">
    <property type="entry name" value="DapC_direct"/>
    <property type="match status" value="1"/>
</dbReference>
<dbReference type="NCBIfam" id="NF006756">
    <property type="entry name" value="PRK09276.1"/>
    <property type="match status" value="1"/>
</dbReference>
<dbReference type="PANTHER" id="PTHR42832">
    <property type="entry name" value="AMINO ACID AMINOTRANSFERASE"/>
    <property type="match status" value="1"/>
</dbReference>
<dbReference type="PANTHER" id="PTHR42832:SF3">
    <property type="entry name" value="L-GLUTAMINE--4-(METHYLSULFANYL)-2-OXOBUTANOATE AMINOTRANSFERASE"/>
    <property type="match status" value="1"/>
</dbReference>
<dbReference type="Pfam" id="PF00155">
    <property type="entry name" value="Aminotran_1_2"/>
    <property type="match status" value="1"/>
</dbReference>
<dbReference type="SUPFAM" id="SSF53383">
    <property type="entry name" value="PLP-dependent transferases"/>
    <property type="match status" value="1"/>
</dbReference>
<dbReference type="PROSITE" id="PS00105">
    <property type="entry name" value="AA_TRANSFER_CLASS_1"/>
    <property type="match status" value="1"/>
</dbReference>
<reference key="1">
    <citation type="journal article" date="2005" name="Science">
        <title>Genome sequence of the PCE-dechlorinating bacterium Dehalococcoides ethenogenes.</title>
        <authorList>
            <person name="Seshadri R."/>
            <person name="Adrian L."/>
            <person name="Fouts D.E."/>
            <person name="Eisen J.A."/>
            <person name="Phillippy A.M."/>
            <person name="Methe B.A."/>
            <person name="Ward N.L."/>
            <person name="Nelson W.C."/>
            <person name="DeBoy R.T."/>
            <person name="Khouri H.M."/>
            <person name="Kolonay J.F."/>
            <person name="Dodson R.J."/>
            <person name="Daugherty S.C."/>
            <person name="Brinkac L.M."/>
            <person name="Sullivan S.A."/>
            <person name="Madupu R."/>
            <person name="Nelson K.E."/>
            <person name="Kang K.H."/>
            <person name="Impraim M."/>
            <person name="Tran K."/>
            <person name="Robinson J.M."/>
            <person name="Forberger H.A."/>
            <person name="Fraser C.M."/>
            <person name="Zinder S.H."/>
            <person name="Heidelberg J.F."/>
        </authorList>
    </citation>
    <scope>NUCLEOTIDE SEQUENCE [LARGE SCALE GENOMIC DNA]</scope>
    <source>
        <strain>ATCC BAA-2266 / KCTC 15142 / 195</strain>
    </source>
</reference>
<gene>
    <name evidence="1" type="primary">dapL</name>
    <name type="ordered locus">DET0739</name>
</gene>
<name>DAPAT_DEHM1</name>
<comment type="function">
    <text evidence="1">Involved in the synthesis of meso-diaminopimelate (m-DAP or DL-DAP), required for both lysine and peptidoglycan biosynthesis. Catalyzes the direct conversion of tetrahydrodipicolinate to LL-diaminopimelate.</text>
</comment>
<comment type="catalytic activity">
    <reaction evidence="1">
        <text>(2S,6S)-2,6-diaminopimelate + 2-oxoglutarate = (S)-2,3,4,5-tetrahydrodipicolinate + L-glutamate + H2O + H(+)</text>
        <dbReference type="Rhea" id="RHEA:23988"/>
        <dbReference type="ChEBI" id="CHEBI:15377"/>
        <dbReference type="ChEBI" id="CHEBI:15378"/>
        <dbReference type="ChEBI" id="CHEBI:16810"/>
        <dbReference type="ChEBI" id="CHEBI:16845"/>
        <dbReference type="ChEBI" id="CHEBI:29985"/>
        <dbReference type="ChEBI" id="CHEBI:57609"/>
        <dbReference type="EC" id="2.6.1.83"/>
    </reaction>
</comment>
<comment type="cofactor">
    <cofactor evidence="1">
        <name>pyridoxal 5'-phosphate</name>
        <dbReference type="ChEBI" id="CHEBI:597326"/>
    </cofactor>
</comment>
<comment type="pathway">
    <text evidence="1">Amino-acid biosynthesis; L-lysine biosynthesis via DAP pathway; LL-2,6-diaminopimelate from (S)-tetrahydrodipicolinate (aminotransferase route): step 1/1.</text>
</comment>
<comment type="subunit">
    <text evidence="1">Homodimer.</text>
</comment>
<comment type="similarity">
    <text evidence="1">Belongs to the class-I pyridoxal-phosphate-dependent aminotransferase family. LL-diaminopimelate aminotransferase subfamily.</text>
</comment>
<feature type="chain" id="PRO_0000342228" description="LL-diaminopimelate aminotransferase">
    <location>
        <begin position="1"/>
        <end position="388"/>
    </location>
</feature>
<feature type="binding site" evidence="1">
    <location>
        <position position="13"/>
    </location>
    <ligand>
        <name>substrate</name>
    </ligand>
</feature>
<feature type="binding site" evidence="1">
    <location>
        <position position="38"/>
    </location>
    <ligand>
        <name>substrate</name>
    </ligand>
</feature>
<feature type="binding site" evidence="1">
    <location>
        <begin position="101"/>
        <end position="102"/>
    </location>
    <ligand>
        <name>pyridoxal 5'-phosphate</name>
        <dbReference type="ChEBI" id="CHEBI:597326"/>
    </ligand>
</feature>
<feature type="binding site" evidence="1">
    <location>
        <position position="102"/>
    </location>
    <ligand>
        <name>substrate</name>
    </ligand>
</feature>
<feature type="binding site" evidence="1">
    <location>
        <position position="126"/>
    </location>
    <ligand>
        <name>pyridoxal 5'-phosphate</name>
        <dbReference type="ChEBI" id="CHEBI:597326"/>
    </ligand>
</feature>
<feature type="binding site" evidence="1">
    <location>
        <position position="126"/>
    </location>
    <ligand>
        <name>substrate</name>
    </ligand>
</feature>
<feature type="binding site" evidence="1">
    <location>
        <position position="176"/>
    </location>
    <ligand>
        <name>pyridoxal 5'-phosphate</name>
        <dbReference type="ChEBI" id="CHEBI:597326"/>
    </ligand>
</feature>
<feature type="binding site" evidence="1">
    <location>
        <position position="176"/>
    </location>
    <ligand>
        <name>substrate</name>
    </ligand>
</feature>
<feature type="binding site" evidence="1">
    <location>
        <position position="207"/>
    </location>
    <ligand>
        <name>pyridoxal 5'-phosphate</name>
        <dbReference type="ChEBI" id="CHEBI:597326"/>
    </ligand>
</feature>
<feature type="binding site" evidence="1">
    <location>
        <begin position="235"/>
        <end position="237"/>
    </location>
    <ligand>
        <name>pyridoxal 5'-phosphate</name>
        <dbReference type="ChEBI" id="CHEBI:597326"/>
    </ligand>
</feature>
<feature type="binding site" evidence="1">
    <location>
        <position position="246"/>
    </location>
    <ligand>
        <name>pyridoxal 5'-phosphate</name>
        <dbReference type="ChEBI" id="CHEBI:597326"/>
    </ligand>
</feature>
<feature type="binding site" evidence="1">
    <location>
        <position position="364"/>
    </location>
    <ligand>
        <name>substrate</name>
    </ligand>
</feature>
<feature type="modified residue" description="N6-(pyridoxal phosphate)lysine" evidence="1">
    <location>
        <position position="238"/>
    </location>
</feature>
<keyword id="KW-0032">Aminotransferase</keyword>
<keyword id="KW-0663">Pyridoxal phosphate</keyword>
<keyword id="KW-0808">Transferase</keyword>
<protein>
    <recommendedName>
        <fullName evidence="1">LL-diaminopimelate aminotransferase</fullName>
        <shortName evidence="1">DAP-AT</shortName>
        <shortName evidence="1">DAP-aminotransferase</shortName>
        <shortName evidence="1">LL-DAP-aminotransferase</shortName>
        <ecNumber evidence="1">2.6.1.83</ecNumber>
    </recommendedName>
</protein>
<accession>Q3Z8H5</accession>
<sequence length="388" mass="42481">MKLSKRIENLPPYLFVQISKKIAEKRAKGEEVISFAIGDPDLPTPKHILAELCKAAEDPANHRYPETEGLPVLRKAMAEWYEKRFGVKLNPDTEVLPLIGSKEGIGHAAWCFLDPGDVALVPDPAYPVYAISSQLAGAEVFYMPLNKENNFLPDFNAIPQDVLSKAKILWINYPNNPTGAVAGLDFFKEAAEFAAKHNLAVCHDGPYSEIAFDGYRPVSFLEADGAKEVGIEFHSLSKSYNMTGWRIGMAVGNAKMIDALRRFKSNLDSGIPQAIQLMAIAALNGSQDVISQNCAVYQRRRDRLVEALRNIGMEVTAPKASLYIWAPVPEGYTSASFATELLDKTGVVVTPGTGYGTSGEGYIRLSLTVPDEQLEKGIAKLANFKSQA</sequence>
<proteinExistence type="inferred from homology"/>
<evidence type="ECO:0000255" key="1">
    <source>
        <dbReference type="HAMAP-Rule" id="MF_01642"/>
    </source>
</evidence>